<proteinExistence type="evidence at protein level"/>
<accession>Q6AXM7</accession>
<comment type="function">
    <text evidence="3">GTPase component of the Pelota-HBS1L complex, a complex that recognizes stalled ribosomes and triggers the No-Go Decay (NGD) pathway. The Pelota-HBS1L complex recognizes ribosomes stalled at the 3' end of an mRNA and engages stalled ribosomes by destabilizing mRNA in the mRNA channel. Following mRNA extraction from stalled ribosomes by the SKI complex, the Pelota-HBS1L complex promotes recruitment of ABCE1, which drives the disassembly of stalled ribosomes, followed by degradation of damaged mRNAs as part of the NGD pathway.</text>
</comment>
<comment type="catalytic activity">
    <reaction evidence="1">
        <text>GTP + H2O = GDP + phosphate + H(+)</text>
        <dbReference type="Rhea" id="RHEA:19669"/>
        <dbReference type="ChEBI" id="CHEBI:15377"/>
        <dbReference type="ChEBI" id="CHEBI:15378"/>
        <dbReference type="ChEBI" id="CHEBI:37565"/>
        <dbReference type="ChEBI" id="CHEBI:43474"/>
        <dbReference type="ChEBI" id="CHEBI:58189"/>
    </reaction>
    <physiologicalReaction direction="left-to-right" evidence="1">
        <dbReference type="Rhea" id="RHEA:19670"/>
    </physiologicalReaction>
</comment>
<comment type="subunit">
    <text evidence="3">Component of the Pelota-HBS1L complex, also named Dom34-Hbs1 complex, composed of PELO and HBS1L. Interacts with the SKI complex.</text>
</comment>
<comment type="subcellular location">
    <subcellularLocation>
        <location evidence="3">Cytoplasm</location>
    </subcellularLocation>
</comment>
<comment type="similarity">
    <text evidence="4">Belongs to the TRAFAC class translation factor GTPase superfamily. Classic translation factor GTPase family.</text>
</comment>
<sequence>MARHRNVRGYNYDEDFEDDDLYGQSVEDDYCISPSTAAQFIYSRRDNPEEEYGYEDLKESSNSLLNHQLSEIDQARLYSCLDHMREVLGDAVPDDILTEAILKHKFDVQKALSVVLEQDGVQTLKEKSERAVCAGQPSKVISRSSQSESEIVPKVAKMTVSGKKQTMGFEVPGLPSEENGHNVRAPYKGPPGDDVSIASPNVPETGTPKSTAHPPSLQTSEELGCTPTPLRKSGKLRQQIDVKAGLEKRQGGKQLLNLVVIGHVDAGKSTLMGHMLYLLGNVNKRTMHKYEQESKKAGKASFAYAWVLDETGEERERGVTMDVGMTKFETTTKVVTLMDAPGHKDFIPNMITGAAQADVAVLVVDASRGEFEAGFETGGQTREHGLLVRSLGVTQLAVAVNKMDQVNWQQERFQEITGKLGHFLKQAGFKESDVAFIPTSGLSGENLTSRSQSSDLTKWYKGLCLLEQIDSFKPPQRSIDKPFRLCVSDVFKDQGSGFCVTGKIEAGYVQTGDRLLAMPPNETCTAKGITLHDEPVDWAAAGDHVSLTLVGMDIIKINVGCIFCGPKEPIKACTRFRARILIFNIEVPITKGFPVLLHYQTVSEPAVIKRLISVLNKSTGEVTKKKPKLLTKGQNALVELQTQRPVALELYKDFKELGRFMLRYGGSTVAAGVVTEIKE</sequence>
<evidence type="ECO:0000250" key="1">
    <source>
        <dbReference type="UniProtKB" id="P32769"/>
    </source>
</evidence>
<evidence type="ECO:0000250" key="2">
    <source>
        <dbReference type="UniProtKB" id="Q69ZS7"/>
    </source>
</evidence>
<evidence type="ECO:0000250" key="3">
    <source>
        <dbReference type="UniProtKB" id="Q9Y450"/>
    </source>
</evidence>
<evidence type="ECO:0000255" key="4">
    <source>
        <dbReference type="PROSITE-ProRule" id="PRU01059"/>
    </source>
</evidence>
<evidence type="ECO:0000256" key="5">
    <source>
        <dbReference type="SAM" id="MobiDB-lite"/>
    </source>
</evidence>
<evidence type="ECO:0000305" key="6"/>
<evidence type="ECO:0007744" key="7">
    <source>
    </source>
</evidence>
<feature type="chain" id="PRO_0000091494" description="HBS1-like protein">
    <location>
        <begin position="1"/>
        <end position="679"/>
    </location>
</feature>
<feature type="domain" description="tr-type G" evidence="4">
    <location>
        <begin position="253"/>
        <end position="477"/>
    </location>
</feature>
<feature type="region of interest" description="Disordered" evidence="5">
    <location>
        <begin position="171"/>
        <end position="235"/>
    </location>
</feature>
<feature type="region of interest" description="G1" evidence="4">
    <location>
        <begin position="262"/>
        <end position="269"/>
    </location>
</feature>
<feature type="region of interest" description="G2" evidence="4">
    <location>
        <begin position="318"/>
        <end position="322"/>
    </location>
</feature>
<feature type="region of interest" description="G3" evidence="4">
    <location>
        <begin position="339"/>
        <end position="342"/>
    </location>
</feature>
<feature type="region of interest" description="G4" evidence="4">
    <location>
        <begin position="401"/>
        <end position="404"/>
    </location>
</feature>
<feature type="region of interest" description="G5" evidence="4">
    <location>
        <begin position="440"/>
        <end position="442"/>
    </location>
</feature>
<feature type="compositionally biased region" description="Polar residues" evidence="5">
    <location>
        <begin position="198"/>
        <end position="210"/>
    </location>
</feature>
<feature type="binding site" evidence="3">
    <location>
        <begin position="262"/>
        <end position="269"/>
    </location>
    <ligand>
        <name>GTP</name>
        <dbReference type="ChEBI" id="CHEBI:37565"/>
    </ligand>
</feature>
<feature type="binding site" evidence="3">
    <location>
        <begin position="401"/>
        <end position="404"/>
    </location>
    <ligand>
        <name>GTP</name>
        <dbReference type="ChEBI" id="CHEBI:37565"/>
    </ligand>
</feature>
<feature type="binding site" evidence="3">
    <location>
        <begin position="440"/>
        <end position="442"/>
    </location>
    <ligand>
        <name>GTP</name>
        <dbReference type="ChEBI" id="CHEBI:37565"/>
    </ligand>
</feature>
<feature type="modified residue" description="Phosphoserine" evidence="3">
    <location>
        <position position="63"/>
    </location>
</feature>
<feature type="modified residue" description="Phosphoserine" evidence="3">
    <location>
        <position position="113"/>
    </location>
</feature>
<feature type="modified residue" description="Phosphoserine" evidence="2">
    <location>
        <position position="145"/>
    </location>
</feature>
<feature type="modified residue" description="Phosphoserine" evidence="7">
    <location>
        <position position="147"/>
    </location>
</feature>
<feature type="modified residue" description="Phosphothreonine" evidence="3">
    <location>
        <position position="226"/>
    </location>
</feature>
<feature type="modified residue" description="N6-acetyllysine" evidence="2">
    <location>
        <position position="617"/>
    </location>
</feature>
<organism>
    <name type="scientific">Rattus norvegicus</name>
    <name type="common">Rat</name>
    <dbReference type="NCBI Taxonomy" id="10116"/>
    <lineage>
        <taxon>Eukaryota</taxon>
        <taxon>Metazoa</taxon>
        <taxon>Chordata</taxon>
        <taxon>Craniata</taxon>
        <taxon>Vertebrata</taxon>
        <taxon>Euteleostomi</taxon>
        <taxon>Mammalia</taxon>
        <taxon>Eutheria</taxon>
        <taxon>Euarchontoglires</taxon>
        <taxon>Glires</taxon>
        <taxon>Rodentia</taxon>
        <taxon>Myomorpha</taxon>
        <taxon>Muroidea</taxon>
        <taxon>Muridae</taxon>
        <taxon>Murinae</taxon>
        <taxon>Rattus</taxon>
    </lineage>
</organism>
<protein>
    <recommendedName>
        <fullName evidence="6">HBS1-like protein</fullName>
        <ecNumber evidence="1">3.6.5.-</ecNumber>
    </recommendedName>
</protein>
<dbReference type="EC" id="3.6.5.-" evidence="1"/>
<dbReference type="EMBL" id="BC079463">
    <property type="protein sequence ID" value="AAH79463.1"/>
    <property type="molecule type" value="mRNA"/>
</dbReference>
<dbReference type="RefSeq" id="NP_001011934.1">
    <property type="nucleotide sequence ID" value="NM_001011934.1"/>
</dbReference>
<dbReference type="SMR" id="Q6AXM7"/>
<dbReference type="FunCoup" id="Q6AXM7">
    <property type="interactions" value="2756"/>
</dbReference>
<dbReference type="STRING" id="10116.ENSRNOP00000019734"/>
<dbReference type="iPTMnet" id="Q6AXM7"/>
<dbReference type="PhosphoSitePlus" id="Q6AXM7"/>
<dbReference type="jPOST" id="Q6AXM7"/>
<dbReference type="PaxDb" id="10116-ENSRNOP00000019734"/>
<dbReference type="Ensembl" id="ENSRNOT00000019734.8">
    <property type="protein sequence ID" value="ENSRNOP00000019734.7"/>
    <property type="gene ID" value="ENSRNOG00000014531.8"/>
</dbReference>
<dbReference type="GeneID" id="293408"/>
<dbReference type="KEGG" id="rno:293408"/>
<dbReference type="AGR" id="RGD:1308509"/>
<dbReference type="CTD" id="10767"/>
<dbReference type="RGD" id="1308509">
    <property type="gene designation" value="Hbs1l"/>
</dbReference>
<dbReference type="eggNOG" id="KOG0458">
    <property type="taxonomic scope" value="Eukaryota"/>
</dbReference>
<dbReference type="GeneTree" id="ENSGT00940000156274"/>
<dbReference type="HOGENOM" id="CLU_007265_3_6_1"/>
<dbReference type="InParanoid" id="Q6AXM7"/>
<dbReference type="PhylomeDB" id="Q6AXM7"/>
<dbReference type="Reactome" id="R-RNO-429958">
    <property type="pathway name" value="mRNA decay by 3' to 5' exoribonuclease"/>
</dbReference>
<dbReference type="PRO" id="PR:Q6AXM7"/>
<dbReference type="Proteomes" id="UP000002494">
    <property type="component" value="Chromosome 1"/>
</dbReference>
<dbReference type="Bgee" id="ENSRNOG00000014531">
    <property type="expression patterns" value="Expressed in skeletal muscle tissue and 20 other cell types or tissues"/>
</dbReference>
<dbReference type="ExpressionAtlas" id="Q6AXM7">
    <property type="expression patterns" value="baseline and differential"/>
</dbReference>
<dbReference type="GO" id="GO:0022626">
    <property type="term" value="C:cytosolic ribosome"/>
    <property type="evidence" value="ECO:0000266"/>
    <property type="project" value="RGD"/>
</dbReference>
<dbReference type="GO" id="GO:1990533">
    <property type="term" value="C:Dom34-Hbs1 complex"/>
    <property type="evidence" value="ECO:0000250"/>
    <property type="project" value="UniProtKB"/>
</dbReference>
<dbReference type="GO" id="GO:0005525">
    <property type="term" value="F:GTP binding"/>
    <property type="evidence" value="ECO:0007669"/>
    <property type="project" value="UniProtKB-KW"/>
</dbReference>
<dbReference type="GO" id="GO:0003924">
    <property type="term" value="F:GTPase activity"/>
    <property type="evidence" value="ECO:0000318"/>
    <property type="project" value="GO_Central"/>
</dbReference>
<dbReference type="GO" id="GO:0003746">
    <property type="term" value="F:translation elongation factor activity"/>
    <property type="evidence" value="ECO:0007669"/>
    <property type="project" value="UniProtKB-KW"/>
</dbReference>
<dbReference type="GO" id="GO:0070966">
    <property type="term" value="P:nuclear-transcribed mRNA catabolic process, no-go decay"/>
    <property type="evidence" value="ECO:0000250"/>
    <property type="project" value="UniProtKB"/>
</dbReference>
<dbReference type="GO" id="GO:0006417">
    <property type="term" value="P:regulation of translation"/>
    <property type="evidence" value="ECO:0007669"/>
    <property type="project" value="UniProtKB-KW"/>
</dbReference>
<dbReference type="GO" id="GO:0072344">
    <property type="term" value="P:rescue of stalled ribosome"/>
    <property type="evidence" value="ECO:0000266"/>
    <property type="project" value="RGD"/>
</dbReference>
<dbReference type="GO" id="GO:0032790">
    <property type="term" value="P:ribosome disassembly"/>
    <property type="evidence" value="ECO:0000250"/>
    <property type="project" value="UniProtKB"/>
</dbReference>
<dbReference type="GO" id="GO:0006412">
    <property type="term" value="P:translation"/>
    <property type="evidence" value="ECO:0000318"/>
    <property type="project" value="GO_Central"/>
</dbReference>
<dbReference type="CDD" id="cd01883">
    <property type="entry name" value="EF1_alpha"/>
    <property type="match status" value="1"/>
</dbReference>
<dbReference type="CDD" id="cd16267">
    <property type="entry name" value="HBS1-like_II"/>
    <property type="match status" value="1"/>
</dbReference>
<dbReference type="CDD" id="cd04093">
    <property type="entry name" value="HBS1_C_III"/>
    <property type="match status" value="1"/>
</dbReference>
<dbReference type="FunFam" id="1.10.8.10:FF:000039">
    <property type="entry name" value="HBS1-like translational GTPase"/>
    <property type="match status" value="1"/>
</dbReference>
<dbReference type="FunFam" id="2.40.30.10:FF:000035">
    <property type="entry name" value="HBS1-like translational GTPase"/>
    <property type="match status" value="1"/>
</dbReference>
<dbReference type="FunFam" id="2.40.30.10:FF:000020">
    <property type="entry name" value="Translation elongation factor EF-1"/>
    <property type="match status" value="1"/>
</dbReference>
<dbReference type="FunFam" id="3.40.50.300:FF:000204">
    <property type="entry name" value="Translation elongation factor Tu"/>
    <property type="match status" value="1"/>
</dbReference>
<dbReference type="Gene3D" id="1.10.8.10">
    <property type="entry name" value="DNA helicase RuvA subunit, C-terminal domain"/>
    <property type="match status" value="1"/>
</dbReference>
<dbReference type="Gene3D" id="3.40.50.300">
    <property type="entry name" value="P-loop containing nucleotide triphosphate hydrolases"/>
    <property type="match status" value="1"/>
</dbReference>
<dbReference type="Gene3D" id="2.40.30.10">
    <property type="entry name" value="Translation factors"/>
    <property type="match status" value="2"/>
</dbReference>
<dbReference type="InterPro" id="IPR004161">
    <property type="entry name" value="EFTu-like_2"/>
</dbReference>
<dbReference type="InterPro" id="IPR054696">
    <property type="entry name" value="GTP-eEF1A_C"/>
</dbReference>
<dbReference type="InterPro" id="IPR015033">
    <property type="entry name" value="HBS1-like_N"/>
</dbReference>
<dbReference type="InterPro" id="IPR037189">
    <property type="entry name" value="HBS1-like_N_sf"/>
</dbReference>
<dbReference type="InterPro" id="IPR027417">
    <property type="entry name" value="P-loop_NTPase"/>
</dbReference>
<dbReference type="InterPro" id="IPR000795">
    <property type="entry name" value="T_Tr_GTP-bd_dom"/>
</dbReference>
<dbReference type="InterPro" id="IPR050100">
    <property type="entry name" value="TRAFAC_GTPase_members"/>
</dbReference>
<dbReference type="InterPro" id="IPR009000">
    <property type="entry name" value="Transl_B-barrel_sf"/>
</dbReference>
<dbReference type="InterPro" id="IPR009001">
    <property type="entry name" value="Transl_elong_EF1A/Init_IF2_C"/>
</dbReference>
<dbReference type="PANTHER" id="PTHR23115">
    <property type="entry name" value="TRANSLATION FACTOR"/>
    <property type="match status" value="1"/>
</dbReference>
<dbReference type="Pfam" id="PF22594">
    <property type="entry name" value="GTP-eEF1A_C"/>
    <property type="match status" value="1"/>
</dbReference>
<dbReference type="Pfam" id="PF00009">
    <property type="entry name" value="GTP_EFTU"/>
    <property type="match status" value="1"/>
</dbReference>
<dbReference type="Pfam" id="PF03144">
    <property type="entry name" value="GTP_EFTU_D2"/>
    <property type="match status" value="1"/>
</dbReference>
<dbReference type="Pfam" id="PF08938">
    <property type="entry name" value="HBS1_N"/>
    <property type="match status" value="1"/>
</dbReference>
<dbReference type="PRINTS" id="PR00315">
    <property type="entry name" value="ELONGATNFCT"/>
</dbReference>
<dbReference type="SUPFAM" id="SSF50465">
    <property type="entry name" value="EF-Tu/eEF-1alpha/eIF2-gamma C-terminal domain"/>
    <property type="match status" value="1"/>
</dbReference>
<dbReference type="SUPFAM" id="SSF109732">
    <property type="entry name" value="HBS1-like domain"/>
    <property type="match status" value="1"/>
</dbReference>
<dbReference type="SUPFAM" id="SSF52540">
    <property type="entry name" value="P-loop containing nucleoside triphosphate hydrolases"/>
    <property type="match status" value="1"/>
</dbReference>
<dbReference type="SUPFAM" id="SSF50447">
    <property type="entry name" value="Translation proteins"/>
    <property type="match status" value="1"/>
</dbReference>
<dbReference type="PROSITE" id="PS51722">
    <property type="entry name" value="G_TR_2"/>
    <property type="match status" value="1"/>
</dbReference>
<name>HBS1L_RAT</name>
<gene>
    <name type="primary">Hbs1l</name>
</gene>
<reference key="1">
    <citation type="journal article" date="2004" name="Genome Res.">
        <title>The status, quality, and expansion of the NIH full-length cDNA project: the Mammalian Gene Collection (MGC).</title>
        <authorList>
            <consortium name="The MGC Project Team"/>
        </authorList>
    </citation>
    <scope>NUCLEOTIDE SEQUENCE [LARGE SCALE MRNA]</scope>
    <source>
        <tissue>Lung</tissue>
    </source>
</reference>
<reference key="2">
    <citation type="journal article" date="2012" name="Nat. Commun.">
        <title>Quantitative maps of protein phosphorylation sites across 14 different rat organs and tissues.</title>
        <authorList>
            <person name="Lundby A."/>
            <person name="Secher A."/>
            <person name="Lage K."/>
            <person name="Nordsborg N.B."/>
            <person name="Dmytriyev A."/>
            <person name="Lundby C."/>
            <person name="Olsen J.V."/>
        </authorList>
    </citation>
    <scope>PHOSPHORYLATION [LARGE SCALE ANALYSIS] AT SER-147</scope>
    <scope>IDENTIFICATION BY MASS SPECTROMETRY [LARGE SCALE ANALYSIS]</scope>
</reference>
<keyword id="KW-0007">Acetylation</keyword>
<keyword id="KW-0963">Cytoplasm</keyword>
<keyword id="KW-0251">Elongation factor</keyword>
<keyword id="KW-0342">GTP-binding</keyword>
<keyword id="KW-0378">Hydrolase</keyword>
<keyword id="KW-0547">Nucleotide-binding</keyword>
<keyword id="KW-0597">Phosphoprotein</keyword>
<keyword id="KW-0648">Protein biosynthesis</keyword>
<keyword id="KW-1185">Reference proteome</keyword>
<keyword id="KW-0810">Translation regulation</keyword>